<sequence>MQKIPLTVRGAELLKQELQQLKSVARPEVIEAIAEARSHGDLSENAEYEAAKERQGFIEGRISELEHKLSVAHIINPTEIHAEGKIVFGTTVTLEDLETEEHVTYQIVGEDEADIKQGKIYVGSPIARALIGKEEGDTAEVQAPGGVREYDIIEVRYI</sequence>
<proteinExistence type="inferred from homology"/>
<name>GREA_NEIMA</name>
<protein>
    <recommendedName>
        <fullName evidence="1">Transcription elongation factor GreA</fullName>
    </recommendedName>
    <alternativeName>
        <fullName evidence="1">Transcript cleavage factor GreA</fullName>
    </alternativeName>
</protein>
<feature type="chain" id="PRO_0000176945" description="Transcription elongation factor GreA">
    <location>
        <begin position="1"/>
        <end position="158"/>
    </location>
</feature>
<feature type="coiled-coil region" evidence="1">
    <location>
        <begin position="46"/>
        <end position="66"/>
    </location>
</feature>
<keyword id="KW-0175">Coiled coil</keyword>
<keyword id="KW-0238">DNA-binding</keyword>
<keyword id="KW-0804">Transcription</keyword>
<keyword id="KW-0805">Transcription regulation</keyword>
<gene>
    <name evidence="1" type="primary">greA</name>
    <name type="ordered locus">NMA1643</name>
</gene>
<accession>Q9JTT4</accession>
<accession>A1ISL9</accession>
<dbReference type="EMBL" id="AL157959">
    <property type="protein sequence ID" value="CAM08778.1"/>
    <property type="molecule type" value="Genomic_DNA"/>
</dbReference>
<dbReference type="PIR" id="G81858">
    <property type="entry name" value="G81858"/>
</dbReference>
<dbReference type="RefSeq" id="WP_002216944.1">
    <property type="nucleotide sequence ID" value="NC_003116.1"/>
</dbReference>
<dbReference type="SMR" id="Q9JTT4"/>
<dbReference type="EnsemblBacteria" id="CAM08778">
    <property type="protein sequence ID" value="CAM08778"/>
    <property type="gene ID" value="NMA1643"/>
</dbReference>
<dbReference type="GeneID" id="93387940"/>
<dbReference type="KEGG" id="nma:NMA1643"/>
<dbReference type="HOGENOM" id="CLU_101379_2_0_4"/>
<dbReference type="Proteomes" id="UP000000626">
    <property type="component" value="Chromosome"/>
</dbReference>
<dbReference type="GO" id="GO:0003677">
    <property type="term" value="F:DNA binding"/>
    <property type="evidence" value="ECO:0007669"/>
    <property type="project" value="UniProtKB-UniRule"/>
</dbReference>
<dbReference type="GO" id="GO:0070063">
    <property type="term" value="F:RNA polymerase binding"/>
    <property type="evidence" value="ECO:0007669"/>
    <property type="project" value="InterPro"/>
</dbReference>
<dbReference type="GO" id="GO:0006354">
    <property type="term" value="P:DNA-templated transcription elongation"/>
    <property type="evidence" value="ECO:0007669"/>
    <property type="project" value="TreeGrafter"/>
</dbReference>
<dbReference type="GO" id="GO:0032784">
    <property type="term" value="P:regulation of DNA-templated transcription elongation"/>
    <property type="evidence" value="ECO:0007669"/>
    <property type="project" value="UniProtKB-UniRule"/>
</dbReference>
<dbReference type="FunFam" id="1.10.287.180:FF:000001">
    <property type="entry name" value="Transcription elongation factor GreA"/>
    <property type="match status" value="1"/>
</dbReference>
<dbReference type="FunFam" id="3.10.50.30:FF:000001">
    <property type="entry name" value="Transcription elongation factor GreA"/>
    <property type="match status" value="1"/>
</dbReference>
<dbReference type="Gene3D" id="3.10.50.30">
    <property type="entry name" value="Transcription elongation factor, GreA/GreB, C-terminal domain"/>
    <property type="match status" value="1"/>
</dbReference>
<dbReference type="Gene3D" id="1.10.287.180">
    <property type="entry name" value="Transcription elongation factor, GreA/GreB, N-terminal domain"/>
    <property type="match status" value="1"/>
</dbReference>
<dbReference type="HAMAP" id="MF_00105">
    <property type="entry name" value="GreA_GreB"/>
    <property type="match status" value="1"/>
</dbReference>
<dbReference type="InterPro" id="IPR036953">
    <property type="entry name" value="GreA/GreB_C_sf"/>
</dbReference>
<dbReference type="InterPro" id="IPR018151">
    <property type="entry name" value="TF_GreA/GreB_CS"/>
</dbReference>
<dbReference type="InterPro" id="IPR006359">
    <property type="entry name" value="Tscrpt_elong_fac_GreA"/>
</dbReference>
<dbReference type="InterPro" id="IPR028624">
    <property type="entry name" value="Tscrpt_elong_fac_GreA/B"/>
</dbReference>
<dbReference type="InterPro" id="IPR001437">
    <property type="entry name" value="Tscrpt_elong_fac_GreA/B_C"/>
</dbReference>
<dbReference type="InterPro" id="IPR023459">
    <property type="entry name" value="Tscrpt_elong_fac_GreA/B_fam"/>
</dbReference>
<dbReference type="InterPro" id="IPR022691">
    <property type="entry name" value="Tscrpt_elong_fac_GreA/B_N"/>
</dbReference>
<dbReference type="InterPro" id="IPR036805">
    <property type="entry name" value="Tscrpt_elong_fac_GreA/B_N_sf"/>
</dbReference>
<dbReference type="NCBIfam" id="TIGR01462">
    <property type="entry name" value="greA"/>
    <property type="match status" value="1"/>
</dbReference>
<dbReference type="NCBIfam" id="NF001261">
    <property type="entry name" value="PRK00226.1-2"/>
    <property type="match status" value="1"/>
</dbReference>
<dbReference type="NCBIfam" id="NF001263">
    <property type="entry name" value="PRK00226.1-4"/>
    <property type="match status" value="1"/>
</dbReference>
<dbReference type="NCBIfam" id="NF001264">
    <property type="entry name" value="PRK00226.1-5"/>
    <property type="match status" value="1"/>
</dbReference>
<dbReference type="PANTHER" id="PTHR30437">
    <property type="entry name" value="TRANSCRIPTION ELONGATION FACTOR GREA"/>
    <property type="match status" value="1"/>
</dbReference>
<dbReference type="PANTHER" id="PTHR30437:SF4">
    <property type="entry name" value="TRANSCRIPTION ELONGATION FACTOR GREA"/>
    <property type="match status" value="1"/>
</dbReference>
<dbReference type="Pfam" id="PF01272">
    <property type="entry name" value="GreA_GreB"/>
    <property type="match status" value="1"/>
</dbReference>
<dbReference type="Pfam" id="PF03449">
    <property type="entry name" value="GreA_GreB_N"/>
    <property type="match status" value="1"/>
</dbReference>
<dbReference type="PIRSF" id="PIRSF006092">
    <property type="entry name" value="GreA_GreB"/>
    <property type="match status" value="1"/>
</dbReference>
<dbReference type="SUPFAM" id="SSF54534">
    <property type="entry name" value="FKBP-like"/>
    <property type="match status" value="1"/>
</dbReference>
<dbReference type="SUPFAM" id="SSF46557">
    <property type="entry name" value="GreA transcript cleavage protein, N-terminal domain"/>
    <property type="match status" value="1"/>
</dbReference>
<dbReference type="PROSITE" id="PS00829">
    <property type="entry name" value="GREAB_1"/>
    <property type="match status" value="1"/>
</dbReference>
<comment type="function">
    <text evidence="1">Necessary for efficient RNA polymerase transcription elongation past template-encoded arresting sites. The arresting sites in DNA have the property of trapping a certain fraction of elongating RNA polymerases that pass through, resulting in locked ternary complexes. Cleavage of the nascent transcript by cleavage factors such as GreA or GreB allows the resumption of elongation from the new 3'terminus. GreA releases sequences of 2 to 3 nucleotides.</text>
</comment>
<comment type="similarity">
    <text evidence="1">Belongs to the GreA/GreB family.</text>
</comment>
<organism>
    <name type="scientific">Neisseria meningitidis serogroup A / serotype 4A (strain DSM 15465 / Z2491)</name>
    <dbReference type="NCBI Taxonomy" id="122587"/>
    <lineage>
        <taxon>Bacteria</taxon>
        <taxon>Pseudomonadati</taxon>
        <taxon>Pseudomonadota</taxon>
        <taxon>Betaproteobacteria</taxon>
        <taxon>Neisseriales</taxon>
        <taxon>Neisseriaceae</taxon>
        <taxon>Neisseria</taxon>
    </lineage>
</organism>
<evidence type="ECO:0000255" key="1">
    <source>
        <dbReference type="HAMAP-Rule" id="MF_00105"/>
    </source>
</evidence>
<reference key="1">
    <citation type="journal article" date="2000" name="Nature">
        <title>Complete DNA sequence of a serogroup A strain of Neisseria meningitidis Z2491.</title>
        <authorList>
            <person name="Parkhill J."/>
            <person name="Achtman M."/>
            <person name="James K.D."/>
            <person name="Bentley S.D."/>
            <person name="Churcher C.M."/>
            <person name="Klee S.R."/>
            <person name="Morelli G."/>
            <person name="Basham D."/>
            <person name="Brown D."/>
            <person name="Chillingworth T."/>
            <person name="Davies R.M."/>
            <person name="Davis P."/>
            <person name="Devlin K."/>
            <person name="Feltwell T."/>
            <person name="Hamlin N."/>
            <person name="Holroyd S."/>
            <person name="Jagels K."/>
            <person name="Leather S."/>
            <person name="Moule S."/>
            <person name="Mungall K.L."/>
            <person name="Quail M.A."/>
            <person name="Rajandream M.A."/>
            <person name="Rutherford K.M."/>
            <person name="Simmonds M."/>
            <person name="Skelton J."/>
            <person name="Whitehead S."/>
            <person name="Spratt B.G."/>
            <person name="Barrell B.G."/>
        </authorList>
    </citation>
    <scope>NUCLEOTIDE SEQUENCE [LARGE SCALE GENOMIC DNA]</scope>
    <source>
        <strain>DSM 15465 / Z2491</strain>
    </source>
</reference>